<evidence type="ECO:0000250" key="1">
    <source>
        <dbReference type="UniProtKB" id="A0Q4N6"/>
    </source>
</evidence>
<evidence type="ECO:0000255" key="2"/>
<evidence type="ECO:0000269" key="3">
    <source>
    </source>
</evidence>
<evidence type="ECO:0000269" key="4">
    <source>
    </source>
</evidence>
<evidence type="ECO:0000303" key="5">
    <source>
    </source>
</evidence>
<evidence type="ECO:0000305" key="6"/>
<evidence type="ECO:0000305" key="7">
    <source>
    </source>
</evidence>
<organism>
    <name type="scientific">Rhizobium leguminosarum</name>
    <dbReference type="NCBI Taxonomy" id="384"/>
    <lineage>
        <taxon>Bacteria</taxon>
        <taxon>Pseudomonadati</taxon>
        <taxon>Pseudomonadota</taxon>
        <taxon>Alphaproteobacteria</taxon>
        <taxon>Hyphomicrobiales</taxon>
        <taxon>Rhizobiaceae</taxon>
        <taxon>Rhizobium/Agrobacterium group</taxon>
        <taxon>Rhizobium</taxon>
    </lineage>
</organism>
<dbReference type="EC" id="3.1.-.-" evidence="6"/>
<dbReference type="EMBL" id="DQ364144">
    <property type="protein sequence ID" value="ABC96320.1"/>
    <property type="molecule type" value="Genomic_DNA"/>
</dbReference>
<dbReference type="SMR" id="Q1WDN2"/>
<dbReference type="eggNOG" id="COG0671">
    <property type="taxonomic scope" value="Bacteria"/>
</dbReference>
<dbReference type="UniPathway" id="UPA00973"/>
<dbReference type="GO" id="GO:0005886">
    <property type="term" value="C:plasma membrane"/>
    <property type="evidence" value="ECO:0007669"/>
    <property type="project" value="UniProtKB-SubCell"/>
</dbReference>
<dbReference type="GO" id="GO:0016787">
    <property type="term" value="F:hydrolase activity"/>
    <property type="evidence" value="ECO:0007669"/>
    <property type="project" value="UniProtKB-KW"/>
</dbReference>
<dbReference type="GO" id="GO:0009245">
    <property type="term" value="P:lipid A biosynthetic process"/>
    <property type="evidence" value="ECO:0007669"/>
    <property type="project" value="UniProtKB-UniPathway"/>
</dbReference>
<dbReference type="GO" id="GO:0009103">
    <property type="term" value="P:lipopolysaccharide biosynthetic process"/>
    <property type="evidence" value="ECO:0007669"/>
    <property type="project" value="UniProtKB-KW"/>
</dbReference>
<dbReference type="GO" id="GO:0046677">
    <property type="term" value="P:response to antibiotic"/>
    <property type="evidence" value="ECO:0007669"/>
    <property type="project" value="UniProtKB-KW"/>
</dbReference>
<dbReference type="Gene3D" id="1.20.144.10">
    <property type="entry name" value="Phosphatidic acid phosphatase type 2/haloperoxidase"/>
    <property type="match status" value="1"/>
</dbReference>
<dbReference type="InterPro" id="IPR036938">
    <property type="entry name" value="P_Acid_Pase_2/haloperoxi_sf"/>
</dbReference>
<dbReference type="InterPro" id="IPR000326">
    <property type="entry name" value="P_Acid_Pase_2/haloperoxidase"/>
</dbReference>
<dbReference type="Pfam" id="PF01569">
    <property type="entry name" value="PAP2"/>
    <property type="match status" value="1"/>
</dbReference>
<dbReference type="SMART" id="SM00014">
    <property type="entry name" value="acidPPc"/>
    <property type="match status" value="1"/>
</dbReference>
<dbReference type="SUPFAM" id="SSF48317">
    <property type="entry name" value="Acid phosphatase/Vanadium-dependent haloperoxidase"/>
    <property type="match status" value="1"/>
</dbReference>
<comment type="function">
    <text evidence="3">Removes the 4'-phosphate moiety from lipid IV(A) (a tetraacylated precursor of lipid A).</text>
</comment>
<comment type="pathway">
    <text evidence="6">Bacterial outer membrane biogenesis; LPS lipid A biosynthesis.</text>
</comment>
<comment type="subcellular location">
    <subcellularLocation>
        <location evidence="1">Cell inner membrane</location>
        <topology evidence="2">Multi-pass membrane protein</topology>
    </subcellularLocation>
</comment>
<comment type="miscellaneous">
    <text evidence="4 7">In R.leguminosarum strain 3841 lipid A lacks phosphate groups, and both tetra- and pentaacylated species exist; the same is probably true of this strain.</text>
</comment>
<comment type="similarity">
    <text evidence="6">Belongs to the lipid A LpxF 4'-phosphatase family.</text>
</comment>
<gene>
    <name evidence="5" type="primary">lpxF</name>
</gene>
<name>LPXF_RHILE</name>
<proteinExistence type="inferred from homology"/>
<protein>
    <recommendedName>
        <fullName evidence="5">Lipid A 4'-phosphatase</fullName>
        <ecNumber evidence="6">3.1.-.-</ecNumber>
    </recommendedName>
</protein>
<accession>Q1WDN2</accession>
<feature type="chain" id="PRO_0000432498" description="Lipid A 4'-phosphatase">
    <location>
        <begin position="1"/>
        <end position="233"/>
    </location>
</feature>
<feature type="topological domain" description="Cytoplasmic" evidence="6">
    <location>
        <position position="1"/>
    </location>
</feature>
<feature type="transmembrane region" description="Helical; Name=1" evidence="2">
    <location>
        <begin position="2"/>
        <end position="22"/>
    </location>
</feature>
<feature type="topological domain" description="Extracellular" evidence="6">
    <location>
        <begin position="23"/>
        <end position="60"/>
    </location>
</feature>
<feature type="transmembrane region" description="Helical; Name=2" evidence="2">
    <location>
        <begin position="61"/>
        <end position="81"/>
    </location>
</feature>
<feature type="topological domain" description="Cytoplasmic" evidence="6">
    <location>
        <begin position="82"/>
        <end position="94"/>
    </location>
</feature>
<feature type="transmembrane region" description="Helical; Name=3" evidence="2">
    <location>
        <begin position="95"/>
        <end position="115"/>
    </location>
</feature>
<feature type="topological domain" description="Extracellular" evidence="6">
    <location>
        <begin position="116"/>
        <end position="149"/>
    </location>
</feature>
<feature type="transmembrane region" description="Helical; Name=4" evidence="2">
    <location>
        <begin position="150"/>
        <end position="170"/>
    </location>
</feature>
<feature type="topological domain" description="Cytoplasmic" evidence="6">
    <location>
        <begin position="171"/>
        <end position="176"/>
    </location>
</feature>
<feature type="transmembrane region" description="Helical; Name=5" evidence="2">
    <location>
        <begin position="177"/>
        <end position="197"/>
    </location>
</feature>
<feature type="topological domain" description="Extracellular" evidence="6">
    <location>
        <begin position="198"/>
        <end position="200"/>
    </location>
</feature>
<feature type="transmembrane region" description="Helical; Name=6" evidence="2">
    <location>
        <begin position="201"/>
        <end position="221"/>
    </location>
</feature>
<feature type="topological domain" description="Cytoplasmic" evidence="6">
    <location>
        <begin position="222"/>
        <end position="233"/>
    </location>
</feature>
<keyword id="KW-0046">Antibiotic resistance</keyword>
<keyword id="KW-0997">Cell inner membrane</keyword>
<keyword id="KW-1003">Cell membrane</keyword>
<keyword id="KW-0378">Hydrolase</keyword>
<keyword id="KW-0441">Lipid A biosynthesis</keyword>
<keyword id="KW-0444">Lipid biosynthesis</keyword>
<keyword id="KW-0443">Lipid metabolism</keyword>
<keyword id="KW-0448">Lipopolysaccharide biosynthesis</keyword>
<keyword id="KW-0472">Membrane</keyword>
<keyword id="KW-0812">Transmembrane</keyword>
<keyword id="KW-1133">Transmembrane helix</keyword>
<sequence length="233" mass="25479">MLLFWMWWALLAVFRAFPGIDIYFSQLFFVGADCDATAAAGNICGGFPYRDVAAFDLLRTVFFRLPYVVAIVMVWKLVECYQQHGATFNAERAQKLKVALGTLLIGPVLLVNVVLKEHWGRPRPIQTDIFGGALHFAEAGSLAGKCVSNCSFVSGEAASAGWLFCLLLFVPKSLRYAVAAPLAAISILTPAMRLSFGAHYLSDVVLGWLSSLVVFAALLALTESQQHQKNSEI</sequence>
<reference key="1">
    <citation type="journal article" date="2006" name="J. Biol. Chem.">
        <title>Expression cloning and periplasmic orientation of the Francisella novicida lipid A 4'-phosphatase LpxF.</title>
        <authorList>
            <person name="Wang X."/>
            <person name="McGrath S.C."/>
            <person name="Cotter R.J."/>
            <person name="Raetz C.R."/>
        </authorList>
    </citation>
    <scope>NUCLEOTIDE SEQUENCE [GENOMIC DNA]</scope>
    <scope>FUNCTION</scope>
</reference>
<reference key="2">
    <citation type="journal article" date="2006" name="J. Bacteriol.">
        <title>The pea nodule environment restores the ability of a Rhizobium leguminosarum lipopolysaccharide acpXL mutant to add 27-hydroxyoctacosanoic acid to its lipid A.</title>
        <authorList>
            <person name="Vedam V."/>
            <person name="Kannenberg E."/>
            <person name="Datta A."/>
            <person name="Brown D."/>
            <person name="Haynes-Gann J.G."/>
            <person name="Sherrier D.J."/>
            <person name="Carlson R.W."/>
        </authorList>
    </citation>
    <scope>LIPID A STRUCTURE</scope>
    <source>
        <strain>3841</strain>
    </source>
</reference>